<dbReference type="EMBL" id="CU329670">
    <property type="protein sequence ID" value="CAB16729.1"/>
    <property type="molecule type" value="Genomic_DNA"/>
</dbReference>
<dbReference type="PIR" id="T39090">
    <property type="entry name" value="T39090"/>
</dbReference>
<dbReference type="RefSeq" id="NP_593846.1">
    <property type="nucleotide sequence ID" value="NM_001019275.2"/>
</dbReference>
<dbReference type="BioGRID" id="278255">
    <property type="interactions" value="22"/>
</dbReference>
<dbReference type="FunCoup" id="O14267">
    <property type="interactions" value="4"/>
</dbReference>
<dbReference type="iPTMnet" id="O14267"/>
<dbReference type="PaxDb" id="4896-SPAC7D4.12c.1"/>
<dbReference type="EnsemblFungi" id="SPAC7D4.12c.1">
    <property type="protein sequence ID" value="SPAC7D4.12c.1:pep"/>
    <property type="gene ID" value="SPAC7D4.12c"/>
</dbReference>
<dbReference type="KEGG" id="spo:2541761"/>
<dbReference type="PomBase" id="SPAC7D4.12c"/>
<dbReference type="VEuPathDB" id="FungiDB:SPAC7D4.12c"/>
<dbReference type="eggNOG" id="ENOG502QPMM">
    <property type="taxonomic scope" value="Eukaryota"/>
</dbReference>
<dbReference type="HOGENOM" id="CLU_007078_2_1_1"/>
<dbReference type="InParanoid" id="O14267"/>
<dbReference type="OMA" id="FAHGCAS"/>
<dbReference type="PhylomeDB" id="O14267"/>
<dbReference type="PRO" id="PR:O14267"/>
<dbReference type="Proteomes" id="UP000002485">
    <property type="component" value="Chromosome I"/>
</dbReference>
<dbReference type="GO" id="GO:0005783">
    <property type="term" value="C:endoplasmic reticulum"/>
    <property type="evidence" value="ECO:0007005"/>
    <property type="project" value="PomBase"/>
</dbReference>
<dbReference type="GO" id="GO:0005789">
    <property type="term" value="C:endoplasmic reticulum membrane"/>
    <property type="evidence" value="ECO:0007669"/>
    <property type="project" value="UniProtKB-SubCell"/>
</dbReference>
<dbReference type="GO" id="GO:0016020">
    <property type="term" value="C:membrane"/>
    <property type="evidence" value="ECO:0000255"/>
    <property type="project" value="PomBase"/>
</dbReference>
<dbReference type="GO" id="GO:0015171">
    <property type="term" value="F:amino acid transmembrane transporter activity"/>
    <property type="evidence" value="ECO:0000255"/>
    <property type="project" value="PomBase"/>
</dbReference>
<dbReference type="InterPro" id="IPR010619">
    <property type="entry name" value="ThrE-like_N"/>
</dbReference>
<dbReference type="InterPro" id="IPR051361">
    <property type="entry name" value="ThrE/Ser_Exporter"/>
</dbReference>
<dbReference type="InterPro" id="IPR024528">
    <property type="entry name" value="ThrE_2"/>
</dbReference>
<dbReference type="PANTHER" id="PTHR31082">
    <property type="entry name" value="PHEROMONE-REGULATED MEMBRANE PROTEIN 10"/>
    <property type="match status" value="1"/>
</dbReference>
<dbReference type="PANTHER" id="PTHR31082:SF4">
    <property type="entry name" value="PHEROMONE-REGULATED MEMBRANE PROTEIN 10"/>
    <property type="match status" value="1"/>
</dbReference>
<dbReference type="Pfam" id="PF06738">
    <property type="entry name" value="ThrE"/>
    <property type="match status" value="1"/>
</dbReference>
<dbReference type="Pfam" id="PF12821">
    <property type="entry name" value="ThrE_2"/>
    <property type="match status" value="1"/>
</dbReference>
<name>YFPC_SCHPO</name>
<accession>O14267</accession>
<protein>
    <recommendedName>
        <fullName>Uncharacterized protein C7D4.12c</fullName>
    </recommendedName>
</protein>
<sequence>MDGNRRVRFNTDRRPYLSPLQTSFPSSTSFQTPTFLIEEDDEDTEDDDGPQVLPVHRAPSPAAFRKRGSITSMDQYLVNMPAVPSPTASKVGLLDARNTDVESYAASYKTQSSSNSVNSLPMRRPTLDRSYSAPMIAAKNLQSDPEKMSNVESTNELPSTTTEAYKLVAAHTAARLEHMRLNALKAANDEGEDVKDNEQDDNIDESDPFANPKASYRGGVLSNLLKLYTNSNTVTSSRISLKHTDPTKWQKHAKRTASSNSLTDLLHASNQTFMAPASGLQSTEEIPQFSKTGHSRGRKFNFHHHSRKNSGLNEEYKITIHLADILQRQKYILKLCRALMVYGAPSHRLEEHMASAAKVLEIEGQFLYIPGCMIVSFGDVNTHTSDMHIVRVNQTIDLGRLKLVHDIYKAVLHDRMGVEEAIRGLDEIFKSPPYFRTWILVVFYGFASATILPMSFQGGWIDLPIAFILGCLVGILQHYIAPRSTMYNSLFEVTGSIITSFLSRAFGSIRYSGGRRFCFSALAEGAIVLILPGYIVLCGSLELQSKNIVAGGVRMFYAIIYSLFLSFGISIGAALYGWMDHNATDSTSCPVSTQMDDKWKILFVPLFTLCLLIVNQARPSQWPVSIFISCAGYVVNYFTAKHFGSNPIANAIGSFAIGCLGNIYSRLGRGVAFAAVLPAIFVQVPSGLAAQGGISSGIEVATSLTNNTYNTSSSSTLDVNSLKFGLVMVQIAIGISVGLFASALVVYPFGKRRSGLFSF</sequence>
<keyword id="KW-0256">Endoplasmic reticulum</keyword>
<keyword id="KW-0472">Membrane</keyword>
<keyword id="KW-1185">Reference proteome</keyword>
<keyword id="KW-0812">Transmembrane</keyword>
<keyword id="KW-1133">Transmembrane helix</keyword>
<gene>
    <name type="ORF">SPAC7D4.12c</name>
</gene>
<feature type="chain" id="PRO_0000372379" description="Uncharacterized protein C7D4.12c">
    <location>
        <begin position="1"/>
        <end position="759"/>
    </location>
</feature>
<feature type="transmembrane region" description="Helical" evidence="1">
    <location>
        <begin position="434"/>
        <end position="454"/>
    </location>
</feature>
<feature type="transmembrane region" description="Helical" evidence="1">
    <location>
        <begin position="456"/>
        <end position="476"/>
    </location>
</feature>
<feature type="transmembrane region" description="Helical" evidence="1">
    <location>
        <begin position="486"/>
        <end position="505"/>
    </location>
</feature>
<feature type="transmembrane region" description="Helical" evidence="1">
    <location>
        <begin position="517"/>
        <end position="537"/>
    </location>
</feature>
<feature type="transmembrane region" description="Helical" evidence="1">
    <location>
        <begin position="555"/>
        <end position="575"/>
    </location>
</feature>
<feature type="transmembrane region" description="Helical" evidence="1">
    <location>
        <begin position="597"/>
        <end position="617"/>
    </location>
</feature>
<feature type="transmembrane region" description="Helical" evidence="1">
    <location>
        <begin position="620"/>
        <end position="640"/>
    </location>
</feature>
<feature type="transmembrane region" description="Helical" evidence="1">
    <location>
        <begin position="643"/>
        <end position="663"/>
    </location>
</feature>
<feature type="transmembrane region" description="Helical" evidence="1">
    <location>
        <begin position="670"/>
        <end position="690"/>
    </location>
</feature>
<feature type="transmembrane region" description="Helical" evidence="1">
    <location>
        <begin position="726"/>
        <end position="746"/>
    </location>
</feature>
<feature type="region of interest" description="Disordered" evidence="2">
    <location>
        <begin position="1"/>
        <end position="31"/>
    </location>
</feature>
<feature type="region of interest" description="Disordered" evidence="2">
    <location>
        <begin position="188"/>
        <end position="211"/>
    </location>
</feature>
<feature type="compositionally biased region" description="Low complexity" evidence="2">
    <location>
        <begin position="17"/>
        <end position="31"/>
    </location>
</feature>
<feature type="compositionally biased region" description="Acidic residues" evidence="2">
    <location>
        <begin position="189"/>
        <end position="207"/>
    </location>
</feature>
<organism>
    <name type="scientific">Schizosaccharomyces pombe (strain 972 / ATCC 24843)</name>
    <name type="common">Fission yeast</name>
    <dbReference type="NCBI Taxonomy" id="284812"/>
    <lineage>
        <taxon>Eukaryota</taxon>
        <taxon>Fungi</taxon>
        <taxon>Dikarya</taxon>
        <taxon>Ascomycota</taxon>
        <taxon>Taphrinomycotina</taxon>
        <taxon>Schizosaccharomycetes</taxon>
        <taxon>Schizosaccharomycetales</taxon>
        <taxon>Schizosaccharomycetaceae</taxon>
        <taxon>Schizosaccharomyces</taxon>
    </lineage>
</organism>
<proteinExistence type="inferred from homology"/>
<comment type="subcellular location">
    <subcellularLocation>
        <location evidence="3">Endoplasmic reticulum membrane</location>
        <topology evidence="3">Multi-pass membrane protein</topology>
    </subcellularLocation>
</comment>
<comment type="similarity">
    <text evidence="4">Belongs to the ThrE exporter (TC 2.A.79) family.</text>
</comment>
<evidence type="ECO:0000255" key="1"/>
<evidence type="ECO:0000256" key="2">
    <source>
        <dbReference type="SAM" id="MobiDB-lite"/>
    </source>
</evidence>
<evidence type="ECO:0000269" key="3">
    <source>
    </source>
</evidence>
<evidence type="ECO:0000305" key="4"/>
<reference key="1">
    <citation type="journal article" date="2002" name="Nature">
        <title>The genome sequence of Schizosaccharomyces pombe.</title>
        <authorList>
            <person name="Wood V."/>
            <person name="Gwilliam R."/>
            <person name="Rajandream M.A."/>
            <person name="Lyne M.H."/>
            <person name="Lyne R."/>
            <person name="Stewart A."/>
            <person name="Sgouros J.G."/>
            <person name="Peat N."/>
            <person name="Hayles J."/>
            <person name="Baker S.G."/>
            <person name="Basham D."/>
            <person name="Bowman S."/>
            <person name="Brooks K."/>
            <person name="Brown D."/>
            <person name="Brown S."/>
            <person name="Chillingworth T."/>
            <person name="Churcher C.M."/>
            <person name="Collins M."/>
            <person name="Connor R."/>
            <person name="Cronin A."/>
            <person name="Davis P."/>
            <person name="Feltwell T."/>
            <person name="Fraser A."/>
            <person name="Gentles S."/>
            <person name="Goble A."/>
            <person name="Hamlin N."/>
            <person name="Harris D.E."/>
            <person name="Hidalgo J."/>
            <person name="Hodgson G."/>
            <person name="Holroyd S."/>
            <person name="Hornsby T."/>
            <person name="Howarth S."/>
            <person name="Huckle E.J."/>
            <person name="Hunt S."/>
            <person name="Jagels K."/>
            <person name="James K.D."/>
            <person name="Jones L."/>
            <person name="Jones M."/>
            <person name="Leather S."/>
            <person name="McDonald S."/>
            <person name="McLean J."/>
            <person name="Mooney P."/>
            <person name="Moule S."/>
            <person name="Mungall K.L."/>
            <person name="Murphy L.D."/>
            <person name="Niblett D."/>
            <person name="Odell C."/>
            <person name="Oliver K."/>
            <person name="O'Neil S."/>
            <person name="Pearson D."/>
            <person name="Quail M.A."/>
            <person name="Rabbinowitsch E."/>
            <person name="Rutherford K.M."/>
            <person name="Rutter S."/>
            <person name="Saunders D."/>
            <person name="Seeger K."/>
            <person name="Sharp S."/>
            <person name="Skelton J."/>
            <person name="Simmonds M.N."/>
            <person name="Squares R."/>
            <person name="Squares S."/>
            <person name="Stevens K."/>
            <person name="Taylor K."/>
            <person name="Taylor R.G."/>
            <person name="Tivey A."/>
            <person name="Walsh S.V."/>
            <person name="Warren T."/>
            <person name="Whitehead S."/>
            <person name="Woodward J.R."/>
            <person name="Volckaert G."/>
            <person name="Aert R."/>
            <person name="Robben J."/>
            <person name="Grymonprez B."/>
            <person name="Weltjens I."/>
            <person name="Vanstreels E."/>
            <person name="Rieger M."/>
            <person name="Schaefer M."/>
            <person name="Mueller-Auer S."/>
            <person name="Gabel C."/>
            <person name="Fuchs M."/>
            <person name="Duesterhoeft A."/>
            <person name="Fritzc C."/>
            <person name="Holzer E."/>
            <person name="Moestl D."/>
            <person name="Hilbert H."/>
            <person name="Borzym K."/>
            <person name="Langer I."/>
            <person name="Beck A."/>
            <person name="Lehrach H."/>
            <person name="Reinhardt R."/>
            <person name="Pohl T.M."/>
            <person name="Eger P."/>
            <person name="Zimmermann W."/>
            <person name="Wedler H."/>
            <person name="Wambutt R."/>
            <person name="Purnelle B."/>
            <person name="Goffeau A."/>
            <person name="Cadieu E."/>
            <person name="Dreano S."/>
            <person name="Gloux S."/>
            <person name="Lelaure V."/>
            <person name="Mottier S."/>
            <person name="Galibert F."/>
            <person name="Aves S.J."/>
            <person name="Xiang Z."/>
            <person name="Hunt C."/>
            <person name="Moore K."/>
            <person name="Hurst S.M."/>
            <person name="Lucas M."/>
            <person name="Rochet M."/>
            <person name="Gaillardin C."/>
            <person name="Tallada V.A."/>
            <person name="Garzon A."/>
            <person name="Thode G."/>
            <person name="Daga R.R."/>
            <person name="Cruzado L."/>
            <person name="Jimenez J."/>
            <person name="Sanchez M."/>
            <person name="del Rey F."/>
            <person name="Benito J."/>
            <person name="Dominguez A."/>
            <person name="Revuelta J.L."/>
            <person name="Moreno S."/>
            <person name="Armstrong J."/>
            <person name="Forsburg S.L."/>
            <person name="Cerutti L."/>
            <person name="Lowe T."/>
            <person name="McCombie W.R."/>
            <person name="Paulsen I."/>
            <person name="Potashkin J."/>
            <person name="Shpakovski G.V."/>
            <person name="Ussery D."/>
            <person name="Barrell B.G."/>
            <person name="Nurse P."/>
        </authorList>
    </citation>
    <scope>NUCLEOTIDE SEQUENCE [LARGE SCALE GENOMIC DNA]</scope>
    <source>
        <strain>972 / ATCC 24843</strain>
    </source>
</reference>
<reference key="2">
    <citation type="journal article" date="2006" name="Nat. Biotechnol.">
        <title>ORFeome cloning and global analysis of protein localization in the fission yeast Schizosaccharomyces pombe.</title>
        <authorList>
            <person name="Matsuyama A."/>
            <person name="Arai R."/>
            <person name="Yashiroda Y."/>
            <person name="Shirai A."/>
            <person name="Kamata A."/>
            <person name="Sekido S."/>
            <person name="Kobayashi Y."/>
            <person name="Hashimoto A."/>
            <person name="Hamamoto M."/>
            <person name="Hiraoka Y."/>
            <person name="Horinouchi S."/>
            <person name="Yoshida M."/>
        </authorList>
    </citation>
    <scope>SUBCELLULAR LOCATION [LARGE SCALE ANALYSIS]</scope>
</reference>